<feature type="chain" id="PRO_1000114811" description="Pyridoxine 5'-phosphate synthase">
    <location>
        <begin position="1"/>
        <end position="262"/>
    </location>
</feature>
<feature type="active site" description="Proton acceptor" evidence="1">
    <location>
        <position position="43"/>
    </location>
</feature>
<feature type="active site" description="Proton acceptor" evidence="1">
    <location>
        <position position="70"/>
    </location>
</feature>
<feature type="active site" description="Proton donor" evidence="1">
    <location>
        <position position="215"/>
    </location>
</feature>
<feature type="binding site" evidence="1">
    <location>
        <position position="6"/>
    </location>
    <ligand>
        <name>3-amino-2-oxopropyl phosphate</name>
        <dbReference type="ChEBI" id="CHEBI:57279"/>
    </ligand>
</feature>
<feature type="binding site" evidence="1">
    <location>
        <begin position="8"/>
        <end position="9"/>
    </location>
    <ligand>
        <name>1-deoxy-D-xylulose 5-phosphate</name>
        <dbReference type="ChEBI" id="CHEBI:57792"/>
    </ligand>
</feature>
<feature type="binding site" evidence="1">
    <location>
        <position position="17"/>
    </location>
    <ligand>
        <name>3-amino-2-oxopropyl phosphate</name>
        <dbReference type="ChEBI" id="CHEBI:57279"/>
    </ligand>
</feature>
<feature type="binding site" evidence="1">
    <location>
        <position position="45"/>
    </location>
    <ligand>
        <name>1-deoxy-D-xylulose 5-phosphate</name>
        <dbReference type="ChEBI" id="CHEBI:57792"/>
    </ligand>
</feature>
<feature type="binding site" evidence="1">
    <location>
        <position position="50"/>
    </location>
    <ligand>
        <name>1-deoxy-D-xylulose 5-phosphate</name>
        <dbReference type="ChEBI" id="CHEBI:57792"/>
    </ligand>
</feature>
<feature type="binding site" evidence="1">
    <location>
        <position position="102"/>
    </location>
    <ligand>
        <name>1-deoxy-D-xylulose 5-phosphate</name>
        <dbReference type="ChEBI" id="CHEBI:57792"/>
    </ligand>
</feature>
<feature type="binding site" evidence="1">
    <location>
        <position position="216"/>
    </location>
    <ligand>
        <name>3-amino-2-oxopropyl phosphate</name>
        <dbReference type="ChEBI" id="CHEBI:57279"/>
    </ligand>
</feature>
<feature type="binding site" evidence="1">
    <location>
        <begin position="237"/>
        <end position="238"/>
    </location>
    <ligand>
        <name>3-amino-2-oxopropyl phosphate</name>
        <dbReference type="ChEBI" id="CHEBI:57279"/>
    </ligand>
</feature>
<feature type="site" description="Transition state stabilizer" evidence="1">
    <location>
        <position position="151"/>
    </location>
</feature>
<evidence type="ECO:0000255" key="1">
    <source>
        <dbReference type="HAMAP-Rule" id="MF_00279"/>
    </source>
</evidence>
<organism>
    <name type="scientific">Helicobacter pylori (strain P12)</name>
    <dbReference type="NCBI Taxonomy" id="570508"/>
    <lineage>
        <taxon>Bacteria</taxon>
        <taxon>Pseudomonadati</taxon>
        <taxon>Campylobacterota</taxon>
        <taxon>Epsilonproteobacteria</taxon>
        <taxon>Campylobacterales</taxon>
        <taxon>Helicobacteraceae</taxon>
        <taxon>Helicobacter</taxon>
    </lineage>
</organism>
<protein>
    <recommendedName>
        <fullName evidence="1">Pyridoxine 5'-phosphate synthase</fullName>
        <shortName evidence="1">PNP synthase</shortName>
        <ecNumber evidence="1">2.6.99.2</ecNumber>
    </recommendedName>
</protein>
<reference key="1">
    <citation type="submission" date="2008-10" db="EMBL/GenBank/DDBJ databases">
        <title>The complete genome sequence of Helicobacter pylori strain P12.</title>
        <authorList>
            <person name="Fischer W."/>
            <person name="Windhager L."/>
            <person name="Karnholz A."/>
            <person name="Zeiller M."/>
            <person name="Zimmer R."/>
            <person name="Haas R."/>
        </authorList>
    </citation>
    <scope>NUCLEOTIDE SEQUENCE [LARGE SCALE GENOMIC DNA]</scope>
    <source>
        <strain>P12</strain>
    </source>
</reference>
<comment type="function">
    <text evidence="1">Catalyzes the complicated ring closure reaction between the two acyclic compounds 1-deoxy-D-xylulose-5-phosphate (DXP) and 3-amino-2-oxopropyl phosphate (1-amino-acetone-3-phosphate or AAP) to form pyridoxine 5'-phosphate (PNP) and inorganic phosphate.</text>
</comment>
<comment type="catalytic activity">
    <reaction evidence="1">
        <text>3-amino-2-oxopropyl phosphate + 1-deoxy-D-xylulose 5-phosphate = pyridoxine 5'-phosphate + phosphate + 2 H2O + H(+)</text>
        <dbReference type="Rhea" id="RHEA:15265"/>
        <dbReference type="ChEBI" id="CHEBI:15377"/>
        <dbReference type="ChEBI" id="CHEBI:15378"/>
        <dbReference type="ChEBI" id="CHEBI:43474"/>
        <dbReference type="ChEBI" id="CHEBI:57279"/>
        <dbReference type="ChEBI" id="CHEBI:57792"/>
        <dbReference type="ChEBI" id="CHEBI:58589"/>
        <dbReference type="EC" id="2.6.99.2"/>
    </reaction>
</comment>
<comment type="pathway">
    <text evidence="1">Cofactor biosynthesis; pyridoxine 5'-phosphate biosynthesis; pyridoxine 5'-phosphate from D-erythrose 4-phosphate: step 5/5.</text>
</comment>
<comment type="subunit">
    <text evidence="1">Homooctamer; tetramer of dimers.</text>
</comment>
<comment type="subcellular location">
    <subcellularLocation>
        <location evidence="1">Cytoplasm</location>
    </subcellularLocation>
</comment>
<comment type="similarity">
    <text evidence="1">Belongs to the PNP synthase family.</text>
</comment>
<accession>B6JP91</accession>
<gene>
    <name evidence="1" type="primary">pdxJ</name>
    <name type="ordered locus">HPP12_1573</name>
</gene>
<proteinExistence type="inferred from homology"/>
<name>PDXJ_HELP2</name>
<sequence length="262" mass="29753">MRFGLNIDHIVTLREIRKTYEPEILEALFIAKNTHKVDLITIHLREDKRHIQNEDVLRLLEISPLPINIECSINATITDFLCSLKNKPSKVTIVPENRNEVTTEGGLDCSLKGLEEVIRAYHNKGIEVSLFIDPLKDSLHFAREHQVKQVEFHTGVYANLHNALYSNANNQIHAISALKDKSPKELKEELHNAFLQLRRMSKEAFFMGITACAGHGLNYTNVKELLKIPSLRELNIGHSVVSKAVLVGLEKAILEMAQLIKR</sequence>
<dbReference type="EC" id="2.6.99.2" evidence="1"/>
<dbReference type="EMBL" id="CP001217">
    <property type="protein sequence ID" value="ACJ08719.1"/>
    <property type="molecule type" value="Genomic_DNA"/>
</dbReference>
<dbReference type="SMR" id="B6JP91"/>
<dbReference type="KEGG" id="hpp:HPP12_1573"/>
<dbReference type="HOGENOM" id="CLU_074563_0_0_7"/>
<dbReference type="UniPathway" id="UPA00244">
    <property type="reaction ID" value="UER00313"/>
</dbReference>
<dbReference type="Proteomes" id="UP000008198">
    <property type="component" value="Chromosome"/>
</dbReference>
<dbReference type="GO" id="GO:0005829">
    <property type="term" value="C:cytosol"/>
    <property type="evidence" value="ECO:0007669"/>
    <property type="project" value="TreeGrafter"/>
</dbReference>
<dbReference type="GO" id="GO:0033856">
    <property type="term" value="F:pyridoxine 5'-phosphate synthase activity"/>
    <property type="evidence" value="ECO:0007669"/>
    <property type="project" value="UniProtKB-EC"/>
</dbReference>
<dbReference type="GO" id="GO:0008615">
    <property type="term" value="P:pyridoxine biosynthetic process"/>
    <property type="evidence" value="ECO:0007669"/>
    <property type="project" value="UniProtKB-UniRule"/>
</dbReference>
<dbReference type="FunFam" id="3.20.20.70:FF:000264">
    <property type="entry name" value="Pyridoxine 5'-phosphate synthase"/>
    <property type="match status" value="1"/>
</dbReference>
<dbReference type="Gene3D" id="3.20.20.70">
    <property type="entry name" value="Aldolase class I"/>
    <property type="match status" value="1"/>
</dbReference>
<dbReference type="HAMAP" id="MF_00279">
    <property type="entry name" value="PdxJ"/>
    <property type="match status" value="1"/>
</dbReference>
<dbReference type="InterPro" id="IPR013785">
    <property type="entry name" value="Aldolase_TIM"/>
</dbReference>
<dbReference type="InterPro" id="IPR004569">
    <property type="entry name" value="PyrdxlP_synth_PdxJ"/>
</dbReference>
<dbReference type="InterPro" id="IPR036130">
    <property type="entry name" value="Pyridoxine-5'_phos_synth"/>
</dbReference>
<dbReference type="NCBIfam" id="TIGR00559">
    <property type="entry name" value="pdxJ"/>
    <property type="match status" value="1"/>
</dbReference>
<dbReference type="NCBIfam" id="NF003625">
    <property type="entry name" value="PRK05265.1-3"/>
    <property type="match status" value="1"/>
</dbReference>
<dbReference type="NCBIfam" id="NF003627">
    <property type="entry name" value="PRK05265.1-5"/>
    <property type="match status" value="1"/>
</dbReference>
<dbReference type="PANTHER" id="PTHR30456">
    <property type="entry name" value="PYRIDOXINE 5'-PHOSPHATE SYNTHASE"/>
    <property type="match status" value="1"/>
</dbReference>
<dbReference type="PANTHER" id="PTHR30456:SF0">
    <property type="entry name" value="PYRIDOXINE 5'-PHOSPHATE SYNTHASE"/>
    <property type="match status" value="1"/>
</dbReference>
<dbReference type="Pfam" id="PF03740">
    <property type="entry name" value="PdxJ"/>
    <property type="match status" value="1"/>
</dbReference>
<dbReference type="SUPFAM" id="SSF63892">
    <property type="entry name" value="Pyridoxine 5'-phosphate synthase"/>
    <property type="match status" value="1"/>
</dbReference>
<keyword id="KW-0963">Cytoplasm</keyword>
<keyword id="KW-0664">Pyridoxine biosynthesis</keyword>
<keyword id="KW-0808">Transferase</keyword>